<proteinExistence type="inferred from homology"/>
<gene>
    <name evidence="1" type="primary">eno</name>
    <name type="ordered locus">Cbei_0602</name>
</gene>
<reference key="1">
    <citation type="submission" date="2007-06" db="EMBL/GenBank/DDBJ databases">
        <title>Complete sequence of Clostridium beijerinckii NCIMB 8052.</title>
        <authorList>
            <consortium name="US DOE Joint Genome Institute"/>
            <person name="Copeland A."/>
            <person name="Lucas S."/>
            <person name="Lapidus A."/>
            <person name="Barry K."/>
            <person name="Detter J.C."/>
            <person name="Glavina del Rio T."/>
            <person name="Hammon N."/>
            <person name="Israni S."/>
            <person name="Dalin E."/>
            <person name="Tice H."/>
            <person name="Pitluck S."/>
            <person name="Sims D."/>
            <person name="Brettin T."/>
            <person name="Bruce D."/>
            <person name="Tapia R."/>
            <person name="Brainard J."/>
            <person name="Schmutz J."/>
            <person name="Larimer F."/>
            <person name="Land M."/>
            <person name="Hauser L."/>
            <person name="Kyrpides N."/>
            <person name="Mikhailova N."/>
            <person name="Bennet G."/>
            <person name="Cann I."/>
            <person name="Chen J.-S."/>
            <person name="Contreras A.L."/>
            <person name="Jones D."/>
            <person name="Kashket E."/>
            <person name="Mitchell W."/>
            <person name="Stoddard S."/>
            <person name="Schwarz W."/>
            <person name="Qureshi N."/>
            <person name="Young M."/>
            <person name="Shi Z."/>
            <person name="Ezeji T."/>
            <person name="White B."/>
            <person name="Blaschek H."/>
            <person name="Richardson P."/>
        </authorList>
    </citation>
    <scope>NUCLEOTIDE SEQUENCE [LARGE SCALE GENOMIC DNA]</scope>
    <source>
        <strain>ATCC 51743 / NCIMB 8052</strain>
    </source>
</reference>
<comment type="function">
    <text evidence="1">Catalyzes the reversible conversion of 2-phosphoglycerate (2-PG) into phosphoenolpyruvate (PEP). It is essential for the degradation of carbohydrates via glycolysis.</text>
</comment>
<comment type="catalytic activity">
    <reaction evidence="1">
        <text>(2R)-2-phosphoglycerate = phosphoenolpyruvate + H2O</text>
        <dbReference type="Rhea" id="RHEA:10164"/>
        <dbReference type="ChEBI" id="CHEBI:15377"/>
        <dbReference type="ChEBI" id="CHEBI:58289"/>
        <dbReference type="ChEBI" id="CHEBI:58702"/>
        <dbReference type="EC" id="4.2.1.11"/>
    </reaction>
</comment>
<comment type="cofactor">
    <cofactor evidence="1">
        <name>Mg(2+)</name>
        <dbReference type="ChEBI" id="CHEBI:18420"/>
    </cofactor>
    <text evidence="1">Binds a second Mg(2+) ion via substrate during catalysis.</text>
</comment>
<comment type="pathway">
    <text evidence="1">Carbohydrate degradation; glycolysis; pyruvate from D-glyceraldehyde 3-phosphate: step 4/5.</text>
</comment>
<comment type="subcellular location">
    <subcellularLocation>
        <location evidence="1">Cytoplasm</location>
    </subcellularLocation>
    <subcellularLocation>
        <location evidence="1">Secreted</location>
    </subcellularLocation>
    <subcellularLocation>
        <location evidence="1">Cell surface</location>
    </subcellularLocation>
    <text evidence="1">Fractions of enolase are present in both the cytoplasm and on the cell surface.</text>
</comment>
<comment type="similarity">
    <text evidence="1">Belongs to the enolase family.</text>
</comment>
<name>ENO_CLOB8</name>
<organism>
    <name type="scientific">Clostridium beijerinckii (strain ATCC 51743 / NCIMB 8052)</name>
    <name type="common">Clostridium acetobutylicum</name>
    <dbReference type="NCBI Taxonomy" id="290402"/>
    <lineage>
        <taxon>Bacteria</taxon>
        <taxon>Bacillati</taxon>
        <taxon>Bacillota</taxon>
        <taxon>Clostridia</taxon>
        <taxon>Eubacteriales</taxon>
        <taxon>Clostridiaceae</taxon>
        <taxon>Clostridium</taxon>
    </lineage>
</organism>
<keyword id="KW-0963">Cytoplasm</keyword>
<keyword id="KW-0324">Glycolysis</keyword>
<keyword id="KW-0456">Lyase</keyword>
<keyword id="KW-0460">Magnesium</keyword>
<keyword id="KW-0479">Metal-binding</keyword>
<keyword id="KW-0964">Secreted</keyword>
<dbReference type="EC" id="4.2.1.11" evidence="1"/>
<dbReference type="EMBL" id="CP000721">
    <property type="protein sequence ID" value="ABR32789.1"/>
    <property type="molecule type" value="Genomic_DNA"/>
</dbReference>
<dbReference type="RefSeq" id="WP_011967950.1">
    <property type="nucleotide sequence ID" value="NC_009617.1"/>
</dbReference>
<dbReference type="SMR" id="A6LR09"/>
<dbReference type="GeneID" id="66343507"/>
<dbReference type="KEGG" id="cbe:Cbei_0602"/>
<dbReference type="eggNOG" id="COG0148">
    <property type="taxonomic scope" value="Bacteria"/>
</dbReference>
<dbReference type="HOGENOM" id="CLU_031223_2_1_9"/>
<dbReference type="UniPathway" id="UPA00109">
    <property type="reaction ID" value="UER00187"/>
</dbReference>
<dbReference type="Proteomes" id="UP000000565">
    <property type="component" value="Chromosome"/>
</dbReference>
<dbReference type="GO" id="GO:0009986">
    <property type="term" value="C:cell surface"/>
    <property type="evidence" value="ECO:0007669"/>
    <property type="project" value="UniProtKB-SubCell"/>
</dbReference>
<dbReference type="GO" id="GO:0005576">
    <property type="term" value="C:extracellular region"/>
    <property type="evidence" value="ECO:0007669"/>
    <property type="project" value="UniProtKB-SubCell"/>
</dbReference>
<dbReference type="GO" id="GO:0000015">
    <property type="term" value="C:phosphopyruvate hydratase complex"/>
    <property type="evidence" value="ECO:0007669"/>
    <property type="project" value="InterPro"/>
</dbReference>
<dbReference type="GO" id="GO:0000287">
    <property type="term" value="F:magnesium ion binding"/>
    <property type="evidence" value="ECO:0007669"/>
    <property type="project" value="UniProtKB-UniRule"/>
</dbReference>
<dbReference type="GO" id="GO:0004634">
    <property type="term" value="F:phosphopyruvate hydratase activity"/>
    <property type="evidence" value="ECO:0007669"/>
    <property type="project" value="UniProtKB-UniRule"/>
</dbReference>
<dbReference type="GO" id="GO:0006096">
    <property type="term" value="P:glycolytic process"/>
    <property type="evidence" value="ECO:0007669"/>
    <property type="project" value="UniProtKB-UniRule"/>
</dbReference>
<dbReference type="CDD" id="cd03313">
    <property type="entry name" value="enolase"/>
    <property type="match status" value="1"/>
</dbReference>
<dbReference type="FunFam" id="3.20.20.120:FF:000001">
    <property type="entry name" value="Enolase"/>
    <property type="match status" value="1"/>
</dbReference>
<dbReference type="FunFam" id="3.30.390.10:FF:000001">
    <property type="entry name" value="Enolase"/>
    <property type="match status" value="1"/>
</dbReference>
<dbReference type="Gene3D" id="3.20.20.120">
    <property type="entry name" value="Enolase-like C-terminal domain"/>
    <property type="match status" value="1"/>
</dbReference>
<dbReference type="Gene3D" id="3.30.390.10">
    <property type="entry name" value="Enolase-like, N-terminal domain"/>
    <property type="match status" value="1"/>
</dbReference>
<dbReference type="HAMAP" id="MF_00318">
    <property type="entry name" value="Enolase"/>
    <property type="match status" value="1"/>
</dbReference>
<dbReference type="InterPro" id="IPR000941">
    <property type="entry name" value="Enolase"/>
</dbReference>
<dbReference type="InterPro" id="IPR036849">
    <property type="entry name" value="Enolase-like_C_sf"/>
</dbReference>
<dbReference type="InterPro" id="IPR029017">
    <property type="entry name" value="Enolase-like_N"/>
</dbReference>
<dbReference type="InterPro" id="IPR020810">
    <property type="entry name" value="Enolase_C"/>
</dbReference>
<dbReference type="InterPro" id="IPR020809">
    <property type="entry name" value="Enolase_CS"/>
</dbReference>
<dbReference type="InterPro" id="IPR020811">
    <property type="entry name" value="Enolase_N"/>
</dbReference>
<dbReference type="NCBIfam" id="TIGR01060">
    <property type="entry name" value="eno"/>
    <property type="match status" value="1"/>
</dbReference>
<dbReference type="PANTHER" id="PTHR11902">
    <property type="entry name" value="ENOLASE"/>
    <property type="match status" value="1"/>
</dbReference>
<dbReference type="PANTHER" id="PTHR11902:SF1">
    <property type="entry name" value="ENOLASE"/>
    <property type="match status" value="1"/>
</dbReference>
<dbReference type="Pfam" id="PF00113">
    <property type="entry name" value="Enolase_C"/>
    <property type="match status" value="1"/>
</dbReference>
<dbReference type="Pfam" id="PF03952">
    <property type="entry name" value="Enolase_N"/>
    <property type="match status" value="1"/>
</dbReference>
<dbReference type="PIRSF" id="PIRSF001400">
    <property type="entry name" value="Enolase"/>
    <property type="match status" value="1"/>
</dbReference>
<dbReference type="PRINTS" id="PR00148">
    <property type="entry name" value="ENOLASE"/>
</dbReference>
<dbReference type="SFLD" id="SFLDF00002">
    <property type="entry name" value="enolase"/>
    <property type="match status" value="1"/>
</dbReference>
<dbReference type="SFLD" id="SFLDG00178">
    <property type="entry name" value="enolase"/>
    <property type="match status" value="1"/>
</dbReference>
<dbReference type="SMART" id="SM01192">
    <property type="entry name" value="Enolase_C"/>
    <property type="match status" value="1"/>
</dbReference>
<dbReference type="SMART" id="SM01193">
    <property type="entry name" value="Enolase_N"/>
    <property type="match status" value="1"/>
</dbReference>
<dbReference type="SUPFAM" id="SSF51604">
    <property type="entry name" value="Enolase C-terminal domain-like"/>
    <property type="match status" value="1"/>
</dbReference>
<dbReference type="SUPFAM" id="SSF54826">
    <property type="entry name" value="Enolase N-terminal domain-like"/>
    <property type="match status" value="1"/>
</dbReference>
<dbReference type="PROSITE" id="PS00164">
    <property type="entry name" value="ENOLASE"/>
    <property type="match status" value="1"/>
</dbReference>
<protein>
    <recommendedName>
        <fullName evidence="1">Enolase</fullName>
        <ecNumber evidence="1">4.2.1.11</ecNumber>
    </recommendedName>
    <alternativeName>
        <fullName evidence="1">2-phospho-D-glycerate hydro-lyase</fullName>
    </alternativeName>
    <alternativeName>
        <fullName evidence="1">2-phosphoglycerate dehydratase</fullName>
    </alternativeName>
</protein>
<evidence type="ECO:0000255" key="1">
    <source>
        <dbReference type="HAMAP-Rule" id="MF_00318"/>
    </source>
</evidence>
<feature type="chain" id="PRO_1000079128" description="Enolase">
    <location>
        <begin position="1"/>
        <end position="430"/>
    </location>
</feature>
<feature type="active site" description="Proton donor" evidence="1">
    <location>
        <position position="208"/>
    </location>
</feature>
<feature type="active site" description="Proton acceptor" evidence="1">
    <location>
        <position position="340"/>
    </location>
</feature>
<feature type="binding site" evidence="1">
    <location>
        <position position="166"/>
    </location>
    <ligand>
        <name>(2R)-2-phosphoglycerate</name>
        <dbReference type="ChEBI" id="CHEBI:58289"/>
    </ligand>
</feature>
<feature type="binding site" evidence="1">
    <location>
        <position position="245"/>
    </location>
    <ligand>
        <name>Mg(2+)</name>
        <dbReference type="ChEBI" id="CHEBI:18420"/>
    </ligand>
</feature>
<feature type="binding site" evidence="1">
    <location>
        <position position="288"/>
    </location>
    <ligand>
        <name>Mg(2+)</name>
        <dbReference type="ChEBI" id="CHEBI:18420"/>
    </ligand>
</feature>
<feature type="binding site" evidence="1">
    <location>
        <position position="315"/>
    </location>
    <ligand>
        <name>Mg(2+)</name>
        <dbReference type="ChEBI" id="CHEBI:18420"/>
    </ligand>
</feature>
<feature type="binding site" evidence="1">
    <location>
        <position position="340"/>
    </location>
    <ligand>
        <name>(2R)-2-phosphoglycerate</name>
        <dbReference type="ChEBI" id="CHEBI:58289"/>
    </ligand>
</feature>
<feature type="binding site" evidence="1">
    <location>
        <position position="369"/>
    </location>
    <ligand>
        <name>(2R)-2-phosphoglycerate</name>
        <dbReference type="ChEBI" id="CHEBI:58289"/>
    </ligand>
</feature>
<feature type="binding site" evidence="1">
    <location>
        <position position="370"/>
    </location>
    <ligand>
        <name>(2R)-2-phosphoglycerate</name>
        <dbReference type="ChEBI" id="CHEBI:58289"/>
    </ligand>
</feature>
<feature type="binding site" evidence="1">
    <location>
        <position position="391"/>
    </location>
    <ligand>
        <name>(2R)-2-phosphoglycerate</name>
        <dbReference type="ChEBI" id="CHEBI:58289"/>
    </ligand>
</feature>
<sequence length="430" mass="47059">MKDYLEIVDVVARQILDSRCFPTVEVEIYLEDGTIGRAAVPSGASTGMYEAVELRDGDKDKFLGKGVLNAIRNVNEIIAEELIGCNVFEQTYIDKMLIELDGTNNKSKLGANAILGVSLAVANAAANSLDMPLYRYIGGVNSKVLPVPMMNILNGGSHADNSVDLQEFMIMPAGAPTFSEALRMCAEVYHTLKKILNDKGYSTGIGDEGGFAPNLKSNQEALDVIIEAIGKAGYKAGEEIFIAIDAASSEYYKDGKYVLEHEGRTLTSAEMVDFFEDWVNKYPIISIEDGMAEEDWEGWKLITERLGKKVQLVGDDLFVTNTERLEKGIDLGVANSILIKLNQIGTLTETLNAIEMANRAGYTAVVSHRSGETEDTTIADLVVAVNAGQIKTGAPARSERVAKYNQLLRIEEELNDVAEYRGRKAFFNIK</sequence>
<accession>A6LR09</accession>